<name>PAL2_POPKI</name>
<protein>
    <recommendedName>
        <fullName>Phenylalanine ammonia-lyase G2B</fullName>
        <ecNumber evidence="2">4.3.1.24</ecNumber>
    </recommendedName>
</protein>
<evidence type="ECO:0000250" key="1">
    <source>
        <dbReference type="UniProtKB" id="P11544"/>
    </source>
</evidence>
<evidence type="ECO:0000250" key="2">
    <source>
        <dbReference type="UniProtKB" id="P24481"/>
    </source>
</evidence>
<evidence type="ECO:0000250" key="3">
    <source>
        <dbReference type="UniProtKB" id="Q68G84"/>
    </source>
</evidence>
<evidence type="ECO:0000255" key="4">
    <source>
        <dbReference type="PROSITE-ProRule" id="PRU10122"/>
    </source>
</evidence>
<evidence type="ECO:0000256" key="5">
    <source>
        <dbReference type="SAM" id="MobiDB-lite"/>
    </source>
</evidence>
<evidence type="ECO:0000305" key="6"/>
<accession>Q43052</accession>
<gene>
    <name type="primary">PALG2B</name>
</gene>
<reference key="1">
    <citation type="journal article" date="1995" name="Plant Mol. Biol.">
        <title>Characterization of the structure and determination of mRNA levels of the phenylalanine ammonia-lyase gene family from Populus kitakamiensis.</title>
        <authorList>
            <person name="Osakabe Y."/>
            <person name="Osakabe K."/>
            <person name="Kawai S."/>
            <person name="Katayama Y."/>
            <person name="Morohoshi N."/>
        </authorList>
    </citation>
    <scope>NUCLEOTIDE SEQUENCE [GENOMIC DNA]</scope>
</reference>
<proteinExistence type="inferred from homology"/>
<feature type="chain" id="PRO_0000215414" description="Phenylalanine ammonia-lyase G2B">
    <location>
        <begin position="1"/>
        <end position="710"/>
    </location>
</feature>
<feature type="region of interest" description="Disordered" evidence="5">
    <location>
        <begin position="1"/>
        <end position="21"/>
    </location>
</feature>
<feature type="active site" description="Proton donor/acceptor" evidence="3">
    <location>
        <position position="103"/>
    </location>
</feature>
<feature type="binding site" evidence="3">
    <location>
        <position position="255"/>
    </location>
    <ligand>
        <name>(E)-cinnamate</name>
        <dbReference type="ChEBI" id="CHEBI:15669"/>
    </ligand>
</feature>
<feature type="binding site" evidence="3">
    <location>
        <position position="343"/>
    </location>
    <ligand>
        <name>(E)-cinnamate</name>
        <dbReference type="ChEBI" id="CHEBI:15669"/>
    </ligand>
</feature>
<feature type="binding site" evidence="3">
    <location>
        <position position="349"/>
    </location>
    <ligand>
        <name>(E)-cinnamate</name>
        <dbReference type="ChEBI" id="CHEBI:15669"/>
    </ligand>
</feature>
<feature type="binding site" evidence="3">
    <location>
        <position position="379"/>
    </location>
    <ligand>
        <name>(E)-cinnamate</name>
        <dbReference type="ChEBI" id="CHEBI:15669"/>
    </ligand>
</feature>
<feature type="binding site" evidence="1">
    <location>
        <position position="451"/>
    </location>
    <ligand>
        <name>(E)-cinnamate</name>
        <dbReference type="ChEBI" id="CHEBI:15669"/>
    </ligand>
</feature>
<feature type="binding site" evidence="1">
    <location>
        <position position="479"/>
    </location>
    <ligand>
        <name>(E)-cinnamate</name>
        <dbReference type="ChEBI" id="CHEBI:15669"/>
    </ligand>
</feature>
<feature type="binding site" evidence="3">
    <location>
        <position position="482"/>
    </location>
    <ligand>
        <name>(E)-cinnamate</name>
        <dbReference type="ChEBI" id="CHEBI:15669"/>
    </ligand>
</feature>
<feature type="modified residue" description="2,3-didehydroalanine (Ser)" evidence="4">
    <location>
        <position position="198"/>
    </location>
</feature>
<feature type="cross-link" description="5-imidazolinone (Ala-Gly)" evidence="3">
    <location>
        <begin position="197"/>
        <end position="199"/>
    </location>
</feature>
<organism>
    <name type="scientific">Populus kitakamiensis</name>
    <name type="common">Aspen</name>
    <name type="synonym">Populus sieboldii x Populus grandidentata</name>
    <dbReference type="NCBI Taxonomy" id="34292"/>
    <lineage>
        <taxon>Eukaryota</taxon>
        <taxon>Viridiplantae</taxon>
        <taxon>Streptophyta</taxon>
        <taxon>Embryophyta</taxon>
        <taxon>Tracheophyta</taxon>
        <taxon>Spermatophyta</taxon>
        <taxon>Magnoliopsida</taxon>
        <taxon>eudicotyledons</taxon>
        <taxon>Gunneridae</taxon>
        <taxon>Pentapetalae</taxon>
        <taxon>rosids</taxon>
        <taxon>fabids</taxon>
        <taxon>Malpighiales</taxon>
        <taxon>Salicaceae</taxon>
        <taxon>Saliceae</taxon>
        <taxon>Populus</taxon>
    </lineage>
</organism>
<keyword id="KW-0963">Cytoplasm</keyword>
<keyword id="KW-0456">Lyase</keyword>
<keyword id="KW-0585">Phenylalanine catabolism</keyword>
<keyword id="KW-0587">Phenylpropanoid metabolism</keyword>
<comment type="function">
    <text evidence="2">This is a key enzyme of plant metabolism catalyzing the first reaction in the biosynthesis from L-phenylalanine of a wide variety of natural products based on the phenylpropane skeleton.</text>
</comment>
<comment type="catalytic activity">
    <reaction evidence="2">
        <text>L-phenylalanine = (E)-cinnamate + NH4(+)</text>
        <dbReference type="Rhea" id="RHEA:21384"/>
        <dbReference type="ChEBI" id="CHEBI:15669"/>
        <dbReference type="ChEBI" id="CHEBI:28938"/>
        <dbReference type="ChEBI" id="CHEBI:58095"/>
        <dbReference type="EC" id="4.3.1.24"/>
    </reaction>
</comment>
<comment type="pathway">
    <text evidence="6">Phenylpropanoid metabolism; trans-cinnamate biosynthesis; trans-cinnamate from L-phenylalanine: step 1/1.</text>
</comment>
<comment type="subunit">
    <text evidence="2">Homotetramer.</text>
</comment>
<comment type="subcellular location">
    <subcellularLocation>
        <location evidence="6">Cytoplasm</location>
    </subcellularLocation>
</comment>
<comment type="PTM">
    <text evidence="3">Contains an active site 4-methylidene-imidazol-5-one (MIO), which is formed autocatalytically by cyclization and dehydration of residues Ala-Ser-Gly.</text>
</comment>
<comment type="similarity">
    <text evidence="6">Belongs to the PAL/histidase family.</text>
</comment>
<sequence length="710" mass="77585">MEFCQDSRNGNGSPGFNTNDPLNWGMAAESLKGSHLDEVKRMIEEYRNPVVKLGGETLTIGQVTAIASRDVGVMVELSEEARAGVKASSDWVMDSMSKGTDSYGVTTGFGATSHRRTKQGGELQKELIRFLNAGIFGNGTESSHTLPRSATRAAMLVRTNTLLQGYSGIRFEMLEAITKMINHNITPCLPLRGTITASGDLVPLSYIAGLLTGRPNSKAVGPNGEPLTPAEAFTQAGIDGGFFELQPKEGLALVNGTAVGSGLASMVLFEANVLAILSEVLSAIFAEVMQGKPEFTDHLTHKLKHHPGQIVAAAIMEHILDGSAYVKEAQKLHEIDPLQKPKQDRHALRTSPQWLGPLIEVIRTSTKMIEREINSVNDNPLIDVSRNKALHGGNFQGTPIGVSMDNTRLAIASIGKLMFAQFSELVNDLYNNGLPSNLTGGRNPSLDYGFKGAEIAMASYCSELQFLDQSCTNHVQSAEQHNQDVNSLGLISSRKTAEAIDILKLMSTTFLVGLCHSVDLRHIEENLKNTVKISVSQLPRVLTMGFNGELHPSRFCEKDLLKVVDREHVFSYIDDPCSATYPLMQKLRQVLVEHALVNGEKVRNSTTSIFQKIGSFEEELKTLLPKEVESARLEVENGNPAIPNRIKECRSYPLYKFVREELGTSLLTGEKVKSPGEEFDKVFTAICAGKLIDPLLECLKEWDGAPLPIC</sequence>
<dbReference type="EC" id="4.3.1.24" evidence="2"/>
<dbReference type="EMBL" id="D43802">
    <property type="protein sequence ID" value="BAA07860.1"/>
    <property type="molecule type" value="Genomic_DNA"/>
</dbReference>
<dbReference type="SMR" id="Q43052"/>
<dbReference type="UniPathway" id="UPA00713">
    <property type="reaction ID" value="UER00725"/>
</dbReference>
<dbReference type="GO" id="GO:0005737">
    <property type="term" value="C:cytoplasm"/>
    <property type="evidence" value="ECO:0007669"/>
    <property type="project" value="UniProtKB-SubCell"/>
</dbReference>
<dbReference type="GO" id="GO:0045548">
    <property type="term" value="F:phenylalanine ammonia-lyase activity"/>
    <property type="evidence" value="ECO:0007669"/>
    <property type="project" value="UniProtKB-EC"/>
</dbReference>
<dbReference type="GO" id="GO:0009800">
    <property type="term" value="P:cinnamic acid biosynthetic process"/>
    <property type="evidence" value="ECO:0007669"/>
    <property type="project" value="UniProtKB-UniPathway"/>
</dbReference>
<dbReference type="GO" id="GO:0006559">
    <property type="term" value="P:L-phenylalanine catabolic process"/>
    <property type="evidence" value="ECO:0007669"/>
    <property type="project" value="UniProtKB-KW"/>
</dbReference>
<dbReference type="CDD" id="cd00332">
    <property type="entry name" value="PAL-HAL"/>
    <property type="match status" value="1"/>
</dbReference>
<dbReference type="FunFam" id="1.10.274.20:FF:000001">
    <property type="entry name" value="Phenylalanine ammonia-lyase"/>
    <property type="match status" value="1"/>
</dbReference>
<dbReference type="FunFam" id="1.10.275.10:FF:000009">
    <property type="entry name" value="Phenylalanine ammonia-lyase"/>
    <property type="match status" value="1"/>
</dbReference>
<dbReference type="FunFam" id="1.20.200.10:FF:000009">
    <property type="entry name" value="Phenylalanine ammonia-lyase"/>
    <property type="match status" value="1"/>
</dbReference>
<dbReference type="Gene3D" id="1.20.200.10">
    <property type="entry name" value="Fumarase/aspartase (Central domain)"/>
    <property type="match status" value="1"/>
</dbReference>
<dbReference type="Gene3D" id="1.10.275.10">
    <property type="entry name" value="Fumarase/aspartase (N-terminal domain)"/>
    <property type="match status" value="1"/>
</dbReference>
<dbReference type="Gene3D" id="1.10.274.20">
    <property type="entry name" value="Phenylalanine ammonia-lyase 1, domain 3"/>
    <property type="match status" value="1"/>
</dbReference>
<dbReference type="InterPro" id="IPR001106">
    <property type="entry name" value="Aromatic_Lyase"/>
</dbReference>
<dbReference type="InterPro" id="IPR024083">
    <property type="entry name" value="Fumarase/histidase_N"/>
</dbReference>
<dbReference type="InterPro" id="IPR008948">
    <property type="entry name" value="L-Aspartase-like"/>
</dbReference>
<dbReference type="InterPro" id="IPR022313">
    <property type="entry name" value="Phe/His_NH3-lyase_AS"/>
</dbReference>
<dbReference type="InterPro" id="IPR005922">
    <property type="entry name" value="Phe_NH3-lyase"/>
</dbReference>
<dbReference type="InterPro" id="IPR023144">
    <property type="entry name" value="Phe_NH3-lyase_shielding_dom_sf"/>
</dbReference>
<dbReference type="NCBIfam" id="TIGR01226">
    <property type="entry name" value="phe_am_lyase"/>
    <property type="match status" value="1"/>
</dbReference>
<dbReference type="PANTHER" id="PTHR10362">
    <property type="entry name" value="HISTIDINE AMMONIA-LYASE"/>
    <property type="match status" value="1"/>
</dbReference>
<dbReference type="Pfam" id="PF00221">
    <property type="entry name" value="Lyase_aromatic"/>
    <property type="match status" value="1"/>
</dbReference>
<dbReference type="SUPFAM" id="SSF48557">
    <property type="entry name" value="L-aspartase-like"/>
    <property type="match status" value="1"/>
</dbReference>
<dbReference type="PROSITE" id="PS00488">
    <property type="entry name" value="PAL_HISTIDASE"/>
    <property type="match status" value="1"/>
</dbReference>